<feature type="chain" id="PRO_0000303796" description="Exodeoxyribonuclease 7 large subunit">
    <location>
        <begin position="1"/>
        <end position="422"/>
    </location>
</feature>
<gene>
    <name evidence="1" type="primary">xseA</name>
    <name type="ordered locus">LBL_1499</name>
</gene>
<organism>
    <name type="scientific">Leptospira borgpetersenii serovar Hardjo-bovis (strain L550)</name>
    <dbReference type="NCBI Taxonomy" id="355276"/>
    <lineage>
        <taxon>Bacteria</taxon>
        <taxon>Pseudomonadati</taxon>
        <taxon>Spirochaetota</taxon>
        <taxon>Spirochaetia</taxon>
        <taxon>Leptospirales</taxon>
        <taxon>Leptospiraceae</taxon>
        <taxon>Leptospira</taxon>
    </lineage>
</organism>
<accession>Q051N3</accession>
<keyword id="KW-0963">Cytoplasm</keyword>
<keyword id="KW-0269">Exonuclease</keyword>
<keyword id="KW-0378">Hydrolase</keyword>
<keyword id="KW-0540">Nuclease</keyword>
<protein>
    <recommendedName>
        <fullName evidence="1">Exodeoxyribonuclease 7 large subunit</fullName>
        <ecNumber evidence="1">3.1.11.6</ecNumber>
    </recommendedName>
    <alternativeName>
        <fullName evidence="1">Exodeoxyribonuclease VII large subunit</fullName>
        <shortName evidence="1">Exonuclease VII large subunit</shortName>
    </alternativeName>
</protein>
<proteinExistence type="inferred from homology"/>
<sequence length="422" mass="47095">MEDSKPLTVSEVTRILKNLITGSKDLKNIWVRGEISNYSKASSGHIYFSLKDSSSLMRCTFFNYSNKNYSGKPLSDGKEVQVYGTVTLYEAGGSYNLNVARVEELGQGDILLQIEKLKQKLAAEGIFDPERKRRIPSFPKTLGIATSPSGAAIEDIIKIARSRFPGINILISPCFVQGDEAPDSIVAAIEELNHPSWGVDVIIAGRGGGSFEDLMAFNDEKVVRAYANSRIPIISAVGHQTDVLLSDFAADYSTPTPTAAAEYAVPKEEDVLQFLTQLEGRLKTSLLAKISSSKDRLRLLSGKFIFKEPMQLLNQRNQRVDEIGVRLQKAVFNKVGLARVRLERYEDLTSRMRNIFFHKKQKAEFWTTKVEDLSPPATMKRGYSILRNQKGKIIRSPEETKPEEELQVLLSGGTMQVIRKGK</sequence>
<name>EX7L_LEPBL</name>
<evidence type="ECO:0000255" key="1">
    <source>
        <dbReference type="HAMAP-Rule" id="MF_00378"/>
    </source>
</evidence>
<dbReference type="EC" id="3.1.11.6" evidence="1"/>
<dbReference type="EMBL" id="CP000348">
    <property type="protein sequence ID" value="ABJ78962.1"/>
    <property type="molecule type" value="Genomic_DNA"/>
</dbReference>
<dbReference type="RefSeq" id="WP_011670154.1">
    <property type="nucleotide sequence ID" value="NC_008508.1"/>
</dbReference>
<dbReference type="SMR" id="Q051N3"/>
<dbReference type="KEGG" id="lbl:LBL_1499"/>
<dbReference type="HOGENOM" id="CLU_023625_3_1_12"/>
<dbReference type="GO" id="GO:0005737">
    <property type="term" value="C:cytoplasm"/>
    <property type="evidence" value="ECO:0007669"/>
    <property type="project" value="UniProtKB-SubCell"/>
</dbReference>
<dbReference type="GO" id="GO:0009318">
    <property type="term" value="C:exodeoxyribonuclease VII complex"/>
    <property type="evidence" value="ECO:0007669"/>
    <property type="project" value="InterPro"/>
</dbReference>
<dbReference type="GO" id="GO:0008855">
    <property type="term" value="F:exodeoxyribonuclease VII activity"/>
    <property type="evidence" value="ECO:0007669"/>
    <property type="project" value="UniProtKB-UniRule"/>
</dbReference>
<dbReference type="GO" id="GO:0003676">
    <property type="term" value="F:nucleic acid binding"/>
    <property type="evidence" value="ECO:0007669"/>
    <property type="project" value="InterPro"/>
</dbReference>
<dbReference type="GO" id="GO:0006308">
    <property type="term" value="P:DNA catabolic process"/>
    <property type="evidence" value="ECO:0007669"/>
    <property type="project" value="UniProtKB-UniRule"/>
</dbReference>
<dbReference type="CDD" id="cd04489">
    <property type="entry name" value="ExoVII_LU_OBF"/>
    <property type="match status" value="1"/>
</dbReference>
<dbReference type="Gene3D" id="2.40.50.1010">
    <property type="match status" value="1"/>
</dbReference>
<dbReference type="HAMAP" id="MF_00378">
    <property type="entry name" value="Exonuc_7_L"/>
    <property type="match status" value="1"/>
</dbReference>
<dbReference type="InterPro" id="IPR003753">
    <property type="entry name" value="Exonuc_VII_L"/>
</dbReference>
<dbReference type="InterPro" id="IPR020579">
    <property type="entry name" value="Exonuc_VII_lsu_C"/>
</dbReference>
<dbReference type="InterPro" id="IPR025824">
    <property type="entry name" value="OB-fold_nuc-bd_dom"/>
</dbReference>
<dbReference type="NCBIfam" id="TIGR00237">
    <property type="entry name" value="xseA"/>
    <property type="match status" value="1"/>
</dbReference>
<dbReference type="PANTHER" id="PTHR30008">
    <property type="entry name" value="EXODEOXYRIBONUCLEASE 7 LARGE SUBUNIT"/>
    <property type="match status" value="1"/>
</dbReference>
<dbReference type="PANTHER" id="PTHR30008:SF0">
    <property type="entry name" value="EXODEOXYRIBONUCLEASE 7 LARGE SUBUNIT"/>
    <property type="match status" value="1"/>
</dbReference>
<dbReference type="Pfam" id="PF02601">
    <property type="entry name" value="Exonuc_VII_L"/>
    <property type="match status" value="1"/>
</dbReference>
<dbReference type="Pfam" id="PF13742">
    <property type="entry name" value="tRNA_anti_2"/>
    <property type="match status" value="1"/>
</dbReference>
<comment type="function">
    <text evidence="1">Bidirectionally degrades single-stranded DNA into large acid-insoluble oligonucleotides, which are then degraded further into small acid-soluble oligonucleotides.</text>
</comment>
<comment type="catalytic activity">
    <reaction evidence="1">
        <text>Exonucleolytic cleavage in either 5'- to 3'- or 3'- to 5'-direction to yield nucleoside 5'-phosphates.</text>
        <dbReference type="EC" id="3.1.11.6"/>
    </reaction>
</comment>
<comment type="subunit">
    <text evidence="1">Heterooligomer composed of large and small subunits.</text>
</comment>
<comment type="subcellular location">
    <subcellularLocation>
        <location evidence="1">Cytoplasm</location>
    </subcellularLocation>
</comment>
<comment type="similarity">
    <text evidence="1">Belongs to the XseA family.</text>
</comment>
<reference key="1">
    <citation type="journal article" date="2006" name="Proc. Natl. Acad. Sci. U.S.A.">
        <title>Genome reduction in Leptospira borgpetersenii reflects limited transmission potential.</title>
        <authorList>
            <person name="Bulach D.M."/>
            <person name="Zuerner R.L."/>
            <person name="Wilson P."/>
            <person name="Seemann T."/>
            <person name="McGrath A."/>
            <person name="Cullen P.A."/>
            <person name="Davis J."/>
            <person name="Johnson M."/>
            <person name="Kuczek E."/>
            <person name="Alt D.P."/>
            <person name="Peterson-Burch B."/>
            <person name="Coppel R.L."/>
            <person name="Rood J.I."/>
            <person name="Davies J.K."/>
            <person name="Adler B."/>
        </authorList>
    </citation>
    <scope>NUCLEOTIDE SEQUENCE [LARGE SCALE GENOMIC DNA]</scope>
    <source>
        <strain>L550</strain>
    </source>
</reference>